<accession>Q2W4P9</accession>
<protein>
    <recommendedName>
        <fullName evidence="1">RNA-binding protein Hfq</fullName>
    </recommendedName>
</protein>
<organism>
    <name type="scientific">Paramagnetospirillum magneticum (strain ATCC 700264 / AMB-1)</name>
    <name type="common">Magnetospirillum magneticum</name>
    <dbReference type="NCBI Taxonomy" id="342108"/>
    <lineage>
        <taxon>Bacteria</taxon>
        <taxon>Pseudomonadati</taxon>
        <taxon>Pseudomonadota</taxon>
        <taxon>Alphaproteobacteria</taxon>
        <taxon>Rhodospirillales</taxon>
        <taxon>Magnetospirillaceae</taxon>
        <taxon>Paramagnetospirillum</taxon>
    </lineage>
</organism>
<proteinExistence type="inferred from homology"/>
<gene>
    <name evidence="1" type="primary">hfq</name>
    <name type="ordered locus">amb2372</name>
</gene>
<feature type="chain" id="PRO_0000265163" description="RNA-binding protein Hfq">
    <location>
        <begin position="1"/>
        <end position="84"/>
    </location>
</feature>
<feature type="domain" description="Sm" evidence="2">
    <location>
        <begin position="11"/>
        <end position="71"/>
    </location>
</feature>
<comment type="function">
    <text evidence="1">RNA chaperone that binds small regulatory RNA (sRNAs) and mRNAs to facilitate mRNA translational regulation in response to envelope stress, environmental stress and changes in metabolite concentrations. Also binds with high specificity to tRNAs.</text>
</comment>
<comment type="subunit">
    <text evidence="1">Homohexamer.</text>
</comment>
<comment type="similarity">
    <text evidence="1">Belongs to the Hfq family.</text>
</comment>
<sequence>MSAEKSQNVQDVFLNFIRKNKTPVTIFLVNGVKLQGIVTWFDNFSVLLRRDGHTQLVYKHAISTVMPSTPISLFEPPIKENGEE</sequence>
<name>HFQ_PARM1</name>
<keyword id="KW-0694">RNA-binding</keyword>
<keyword id="KW-0346">Stress response</keyword>
<dbReference type="EMBL" id="AP007255">
    <property type="protein sequence ID" value="BAE51176.1"/>
    <property type="molecule type" value="Genomic_DNA"/>
</dbReference>
<dbReference type="RefSeq" id="WP_011384768.1">
    <property type="nucleotide sequence ID" value="NC_007626.1"/>
</dbReference>
<dbReference type="SMR" id="Q2W4P9"/>
<dbReference type="STRING" id="342108.amb2372"/>
<dbReference type="KEGG" id="mag:amb2372"/>
<dbReference type="HOGENOM" id="CLU_113688_0_0_5"/>
<dbReference type="OrthoDB" id="9799751at2"/>
<dbReference type="Proteomes" id="UP000007058">
    <property type="component" value="Chromosome"/>
</dbReference>
<dbReference type="GO" id="GO:0005829">
    <property type="term" value="C:cytosol"/>
    <property type="evidence" value="ECO:0007669"/>
    <property type="project" value="TreeGrafter"/>
</dbReference>
<dbReference type="GO" id="GO:0003723">
    <property type="term" value="F:RNA binding"/>
    <property type="evidence" value="ECO:0007669"/>
    <property type="project" value="UniProtKB-UniRule"/>
</dbReference>
<dbReference type="GO" id="GO:0006355">
    <property type="term" value="P:regulation of DNA-templated transcription"/>
    <property type="evidence" value="ECO:0007669"/>
    <property type="project" value="InterPro"/>
</dbReference>
<dbReference type="GO" id="GO:0043487">
    <property type="term" value="P:regulation of RNA stability"/>
    <property type="evidence" value="ECO:0007669"/>
    <property type="project" value="TreeGrafter"/>
</dbReference>
<dbReference type="GO" id="GO:0045974">
    <property type="term" value="P:regulation of translation, ncRNA-mediated"/>
    <property type="evidence" value="ECO:0007669"/>
    <property type="project" value="TreeGrafter"/>
</dbReference>
<dbReference type="CDD" id="cd01716">
    <property type="entry name" value="Hfq"/>
    <property type="match status" value="1"/>
</dbReference>
<dbReference type="Gene3D" id="2.30.30.100">
    <property type="match status" value="1"/>
</dbReference>
<dbReference type="HAMAP" id="MF_00436">
    <property type="entry name" value="Hfq"/>
    <property type="match status" value="1"/>
</dbReference>
<dbReference type="InterPro" id="IPR005001">
    <property type="entry name" value="Hfq"/>
</dbReference>
<dbReference type="InterPro" id="IPR010920">
    <property type="entry name" value="LSM_dom_sf"/>
</dbReference>
<dbReference type="InterPro" id="IPR047575">
    <property type="entry name" value="Sm"/>
</dbReference>
<dbReference type="NCBIfam" id="TIGR02383">
    <property type="entry name" value="Hfq"/>
    <property type="match status" value="1"/>
</dbReference>
<dbReference type="NCBIfam" id="NF001602">
    <property type="entry name" value="PRK00395.1"/>
    <property type="match status" value="1"/>
</dbReference>
<dbReference type="PANTHER" id="PTHR34772">
    <property type="entry name" value="RNA-BINDING PROTEIN HFQ"/>
    <property type="match status" value="1"/>
</dbReference>
<dbReference type="PANTHER" id="PTHR34772:SF1">
    <property type="entry name" value="RNA-BINDING PROTEIN HFQ"/>
    <property type="match status" value="1"/>
</dbReference>
<dbReference type="Pfam" id="PF17209">
    <property type="entry name" value="Hfq"/>
    <property type="match status" value="1"/>
</dbReference>
<dbReference type="SUPFAM" id="SSF50182">
    <property type="entry name" value="Sm-like ribonucleoproteins"/>
    <property type="match status" value="1"/>
</dbReference>
<dbReference type="PROSITE" id="PS52002">
    <property type="entry name" value="SM"/>
    <property type="match status" value="1"/>
</dbReference>
<evidence type="ECO:0000255" key="1">
    <source>
        <dbReference type="HAMAP-Rule" id="MF_00436"/>
    </source>
</evidence>
<evidence type="ECO:0000255" key="2">
    <source>
        <dbReference type="PROSITE-ProRule" id="PRU01346"/>
    </source>
</evidence>
<reference key="1">
    <citation type="journal article" date="2005" name="DNA Res.">
        <title>Complete genome sequence of the facultative anaerobic magnetotactic bacterium Magnetospirillum sp. strain AMB-1.</title>
        <authorList>
            <person name="Matsunaga T."/>
            <person name="Okamura Y."/>
            <person name="Fukuda Y."/>
            <person name="Wahyudi A.T."/>
            <person name="Murase Y."/>
            <person name="Takeyama H."/>
        </authorList>
    </citation>
    <scope>NUCLEOTIDE SEQUENCE [LARGE SCALE GENOMIC DNA]</scope>
    <source>
        <strain>ATCC 700264 / AMB-1</strain>
    </source>
</reference>